<evidence type="ECO:0000250" key="1"/>
<evidence type="ECO:0000305" key="2"/>
<sequence>MSQLDSRSASARIRVFDQQRAEAAVRELLYAIGEDPDRDGLVATPSRVARSYREMFAGLYTDPDSVLNTMFDEDHDELVLVKEIPMYSTCEHHLVAFHGVAHVGYIPGDDGRVTGLSKIARLVDLYAKRPQVQERLTSQIADALMKKLDPRGVIVVIEAEHLCMAMRGVRKPGSVTTTSAVRGLFKTNAASRAEALDLILRK</sequence>
<dbReference type="EC" id="3.5.4.16"/>
<dbReference type="EMBL" id="LT708304">
    <property type="protein sequence ID" value="SIU02267.1"/>
    <property type="molecule type" value="Genomic_DNA"/>
</dbReference>
<dbReference type="RefSeq" id="NP_857278.1">
    <property type="nucleotide sequence ID" value="NC_002945.3"/>
</dbReference>
<dbReference type="RefSeq" id="WP_003899597.1">
    <property type="nucleotide sequence ID" value="NC_002945.4"/>
</dbReference>
<dbReference type="SMR" id="P64208"/>
<dbReference type="GeneID" id="45427595"/>
<dbReference type="KEGG" id="mbo:BQ2027_MB3639C"/>
<dbReference type="PATRIC" id="fig|233413.5.peg.3985"/>
<dbReference type="UniPathway" id="UPA00848">
    <property type="reaction ID" value="UER00151"/>
</dbReference>
<dbReference type="Proteomes" id="UP000001419">
    <property type="component" value="Chromosome"/>
</dbReference>
<dbReference type="GO" id="GO:0005737">
    <property type="term" value="C:cytoplasm"/>
    <property type="evidence" value="ECO:0007669"/>
    <property type="project" value="TreeGrafter"/>
</dbReference>
<dbReference type="GO" id="GO:0005525">
    <property type="term" value="F:GTP binding"/>
    <property type="evidence" value="ECO:0007669"/>
    <property type="project" value="UniProtKB-KW"/>
</dbReference>
<dbReference type="GO" id="GO:0003934">
    <property type="term" value="F:GTP cyclohydrolase I activity"/>
    <property type="evidence" value="ECO:0007669"/>
    <property type="project" value="UniProtKB-UniRule"/>
</dbReference>
<dbReference type="GO" id="GO:0008270">
    <property type="term" value="F:zinc ion binding"/>
    <property type="evidence" value="ECO:0007669"/>
    <property type="project" value="UniProtKB-UniRule"/>
</dbReference>
<dbReference type="GO" id="GO:0006730">
    <property type="term" value="P:one-carbon metabolic process"/>
    <property type="evidence" value="ECO:0007669"/>
    <property type="project" value="UniProtKB-UniRule"/>
</dbReference>
<dbReference type="GO" id="GO:0006729">
    <property type="term" value="P:tetrahydrobiopterin biosynthetic process"/>
    <property type="evidence" value="ECO:0007669"/>
    <property type="project" value="TreeGrafter"/>
</dbReference>
<dbReference type="GO" id="GO:0046654">
    <property type="term" value="P:tetrahydrofolate biosynthetic process"/>
    <property type="evidence" value="ECO:0007669"/>
    <property type="project" value="UniProtKB-UniRule"/>
</dbReference>
<dbReference type="FunFam" id="1.10.286.10:FF:000001">
    <property type="entry name" value="GTP cyclohydrolase 1"/>
    <property type="match status" value="1"/>
</dbReference>
<dbReference type="FunFam" id="3.30.1130.10:FF:000001">
    <property type="entry name" value="GTP cyclohydrolase 1"/>
    <property type="match status" value="1"/>
</dbReference>
<dbReference type="Gene3D" id="1.10.286.10">
    <property type="match status" value="1"/>
</dbReference>
<dbReference type="Gene3D" id="3.30.1130.10">
    <property type="match status" value="1"/>
</dbReference>
<dbReference type="HAMAP" id="MF_00223">
    <property type="entry name" value="FolE"/>
    <property type="match status" value="1"/>
</dbReference>
<dbReference type="InterPro" id="IPR043133">
    <property type="entry name" value="GTP-CH-I_C/QueF"/>
</dbReference>
<dbReference type="InterPro" id="IPR043134">
    <property type="entry name" value="GTP-CH-I_N"/>
</dbReference>
<dbReference type="InterPro" id="IPR001474">
    <property type="entry name" value="GTP_CycHdrlase_I"/>
</dbReference>
<dbReference type="InterPro" id="IPR018234">
    <property type="entry name" value="GTP_CycHdrlase_I_CS"/>
</dbReference>
<dbReference type="InterPro" id="IPR020602">
    <property type="entry name" value="GTP_CycHdrlase_I_dom"/>
</dbReference>
<dbReference type="NCBIfam" id="TIGR00063">
    <property type="entry name" value="folE"/>
    <property type="match status" value="1"/>
</dbReference>
<dbReference type="NCBIfam" id="NF006825">
    <property type="entry name" value="PRK09347.1-2"/>
    <property type="match status" value="1"/>
</dbReference>
<dbReference type="NCBIfam" id="NF006826">
    <property type="entry name" value="PRK09347.1-3"/>
    <property type="match status" value="1"/>
</dbReference>
<dbReference type="PANTHER" id="PTHR11109:SF7">
    <property type="entry name" value="GTP CYCLOHYDROLASE 1"/>
    <property type="match status" value="1"/>
</dbReference>
<dbReference type="PANTHER" id="PTHR11109">
    <property type="entry name" value="GTP CYCLOHYDROLASE I"/>
    <property type="match status" value="1"/>
</dbReference>
<dbReference type="Pfam" id="PF01227">
    <property type="entry name" value="GTP_cyclohydroI"/>
    <property type="match status" value="1"/>
</dbReference>
<dbReference type="SUPFAM" id="SSF55620">
    <property type="entry name" value="Tetrahydrobiopterin biosynthesis enzymes-like"/>
    <property type="match status" value="1"/>
</dbReference>
<dbReference type="PROSITE" id="PS00859">
    <property type="entry name" value="GTP_CYCLOHYDROL_1_1"/>
    <property type="match status" value="1"/>
</dbReference>
<dbReference type="PROSITE" id="PS00860">
    <property type="entry name" value="GTP_CYCLOHYDROL_1_2"/>
    <property type="match status" value="1"/>
</dbReference>
<reference key="1">
    <citation type="journal article" date="2003" name="Proc. Natl. Acad. Sci. U.S.A.">
        <title>The complete genome sequence of Mycobacterium bovis.</title>
        <authorList>
            <person name="Garnier T."/>
            <person name="Eiglmeier K."/>
            <person name="Camus J.-C."/>
            <person name="Medina N."/>
            <person name="Mansoor H."/>
            <person name="Pryor M."/>
            <person name="Duthoy S."/>
            <person name="Grondin S."/>
            <person name="Lacroix C."/>
            <person name="Monsempe C."/>
            <person name="Simon S."/>
            <person name="Harris B."/>
            <person name="Atkin R."/>
            <person name="Doggett J."/>
            <person name="Mayes R."/>
            <person name="Keating L."/>
            <person name="Wheeler P.R."/>
            <person name="Parkhill J."/>
            <person name="Barrell B.G."/>
            <person name="Cole S.T."/>
            <person name="Gordon S.V."/>
            <person name="Hewinson R.G."/>
        </authorList>
    </citation>
    <scope>NUCLEOTIDE SEQUENCE [LARGE SCALE GENOMIC DNA]</scope>
    <source>
        <strain>ATCC BAA-935 / AF2122/97</strain>
    </source>
</reference>
<reference key="2">
    <citation type="journal article" date="2017" name="Genome Announc.">
        <title>Updated reference genome sequence and annotation of Mycobacterium bovis AF2122/97.</title>
        <authorList>
            <person name="Malone K.M."/>
            <person name="Farrell D."/>
            <person name="Stuber T.P."/>
            <person name="Schubert O.T."/>
            <person name="Aebersold R."/>
            <person name="Robbe-Austerman S."/>
            <person name="Gordon S.V."/>
        </authorList>
    </citation>
    <scope>NUCLEOTIDE SEQUENCE [LARGE SCALE GENOMIC DNA]</scope>
    <scope>GENOME REANNOTATION</scope>
    <source>
        <strain>ATCC BAA-935 / AF2122/97</strain>
    </source>
</reference>
<proteinExistence type="inferred from homology"/>
<organism>
    <name type="scientific">Mycobacterium bovis (strain ATCC BAA-935 / AF2122/97)</name>
    <dbReference type="NCBI Taxonomy" id="233413"/>
    <lineage>
        <taxon>Bacteria</taxon>
        <taxon>Bacillati</taxon>
        <taxon>Actinomycetota</taxon>
        <taxon>Actinomycetes</taxon>
        <taxon>Mycobacteriales</taxon>
        <taxon>Mycobacteriaceae</taxon>
        <taxon>Mycobacterium</taxon>
        <taxon>Mycobacterium tuberculosis complex</taxon>
    </lineage>
</organism>
<comment type="catalytic activity">
    <reaction>
        <text>GTP + H2O = 7,8-dihydroneopterin 3'-triphosphate + formate + H(+)</text>
        <dbReference type="Rhea" id="RHEA:17473"/>
        <dbReference type="ChEBI" id="CHEBI:15377"/>
        <dbReference type="ChEBI" id="CHEBI:15378"/>
        <dbReference type="ChEBI" id="CHEBI:15740"/>
        <dbReference type="ChEBI" id="CHEBI:37565"/>
        <dbReference type="ChEBI" id="CHEBI:58462"/>
        <dbReference type="EC" id="3.5.4.16"/>
    </reaction>
</comment>
<comment type="pathway">
    <text>Cofactor biosynthesis; 7,8-dihydroneopterin triphosphate biosynthesis; 7,8-dihydroneopterin triphosphate from GTP: step 1/1.</text>
</comment>
<comment type="subunit">
    <text evidence="1">Toroid-shaped homodecamer, composed of two pentamers of five dimers.</text>
</comment>
<comment type="similarity">
    <text evidence="2">Belongs to the GTP cyclohydrolase I family.</text>
</comment>
<protein>
    <recommendedName>
        <fullName>GTP cyclohydrolase 1</fullName>
        <ecNumber>3.5.4.16</ecNumber>
    </recommendedName>
    <alternativeName>
        <fullName>GTP cyclohydrolase I</fullName>
        <shortName>GTP-CH-I</shortName>
    </alternativeName>
</protein>
<feature type="chain" id="PRO_0000119424" description="GTP cyclohydrolase 1">
    <location>
        <begin position="1"/>
        <end position="202"/>
    </location>
</feature>
<feature type="binding site" evidence="1">
    <location>
        <position position="90"/>
    </location>
    <ligand>
        <name>Zn(2+)</name>
        <dbReference type="ChEBI" id="CHEBI:29105"/>
    </ligand>
</feature>
<feature type="binding site" evidence="1">
    <location>
        <position position="93"/>
    </location>
    <ligand>
        <name>Zn(2+)</name>
        <dbReference type="ChEBI" id="CHEBI:29105"/>
    </ligand>
</feature>
<feature type="binding site" evidence="1">
    <location>
        <position position="163"/>
    </location>
    <ligand>
        <name>Zn(2+)</name>
        <dbReference type="ChEBI" id="CHEBI:29105"/>
    </ligand>
</feature>
<accession>P64208</accession>
<accession>A0A1R3Y4P2</accession>
<accession>O06273</accession>
<accession>X2BPE3</accession>
<keyword id="KW-0342">GTP-binding</keyword>
<keyword id="KW-0378">Hydrolase</keyword>
<keyword id="KW-0479">Metal-binding</keyword>
<keyword id="KW-0547">Nucleotide-binding</keyword>
<keyword id="KW-0554">One-carbon metabolism</keyword>
<keyword id="KW-1185">Reference proteome</keyword>
<keyword id="KW-0862">Zinc</keyword>
<name>GCH1_MYCBO</name>
<gene>
    <name type="primary">folE</name>
    <name type="synonym">gchA</name>
    <name type="ordered locus">BQ2027_MB3639C</name>
</gene>